<dbReference type="PIR" id="JC5631">
    <property type="entry name" value="JC5631"/>
</dbReference>
<dbReference type="PDB" id="1IIY">
    <property type="method" value="NMR"/>
    <property type="chains" value="A=1-101"/>
</dbReference>
<dbReference type="PDB" id="1J4V">
    <property type="method" value="NMR"/>
    <property type="chains" value="A/B=1-101"/>
</dbReference>
<dbReference type="PDB" id="1L5B">
    <property type="method" value="X-ray"/>
    <property type="resolution" value="2.00 A"/>
    <property type="chains" value="A/B=1-101"/>
</dbReference>
<dbReference type="PDB" id="1L5E">
    <property type="method" value="NMR"/>
    <property type="chains" value="A/B=1-101"/>
</dbReference>
<dbReference type="PDB" id="1LOM">
    <property type="method" value="X-ray"/>
    <property type="resolution" value="1.72 A"/>
    <property type="chains" value="A=1-101"/>
</dbReference>
<dbReference type="PDB" id="1N02">
    <property type="method" value="NMR"/>
    <property type="chains" value="A=1-101"/>
</dbReference>
<dbReference type="PDB" id="2EZM">
    <property type="method" value="NMR"/>
    <property type="chains" value="A=1-101"/>
</dbReference>
<dbReference type="PDB" id="2EZN">
    <property type="method" value="NMR"/>
    <property type="chains" value="A=1-101"/>
</dbReference>
<dbReference type="PDB" id="2PYS">
    <property type="method" value="X-ray"/>
    <property type="resolution" value="1.80 A"/>
    <property type="chains" value="A/B=1-101"/>
</dbReference>
<dbReference type="PDB" id="2RDK">
    <property type="method" value="X-ray"/>
    <property type="resolution" value="1.35 A"/>
    <property type="chains" value="A/B=1-101"/>
</dbReference>
<dbReference type="PDB" id="2RP3">
    <property type="method" value="NMR"/>
    <property type="chains" value="A=1-101"/>
</dbReference>
<dbReference type="PDB" id="2Z21">
    <property type="method" value="X-ray"/>
    <property type="resolution" value="1.80 A"/>
    <property type="chains" value="A/B=1-101"/>
</dbReference>
<dbReference type="PDB" id="3CZZ">
    <property type="method" value="X-ray"/>
    <property type="resolution" value="1.36 A"/>
    <property type="chains" value="A/B=1-101"/>
</dbReference>
<dbReference type="PDB" id="3EZM">
    <property type="method" value="X-ray"/>
    <property type="resolution" value="1.50 A"/>
    <property type="chains" value="A=1-101"/>
</dbReference>
<dbReference type="PDB" id="3GXY">
    <property type="method" value="X-ray"/>
    <property type="resolution" value="2.40 A"/>
    <property type="chains" value="A/B=1-101"/>
</dbReference>
<dbReference type="PDB" id="3GXZ">
    <property type="method" value="X-ray"/>
    <property type="resolution" value="2.50 A"/>
    <property type="chains" value="A/B=1-101"/>
</dbReference>
<dbReference type="PDB" id="3LHC">
    <property type="method" value="X-ray"/>
    <property type="resolution" value="1.34 A"/>
    <property type="chains" value="A=1-101"/>
</dbReference>
<dbReference type="PDB" id="3S3Y">
    <property type="method" value="X-ray"/>
    <property type="resolution" value="2.00 A"/>
    <property type="chains" value="A=1-101"/>
</dbReference>
<dbReference type="PDB" id="3S3Z">
    <property type="method" value="X-ray"/>
    <property type="resolution" value="1.75 A"/>
    <property type="chains" value="A=1-101"/>
</dbReference>
<dbReference type="PDB" id="4J4C">
    <property type="method" value="X-ray"/>
    <property type="resolution" value="1.90 A"/>
    <property type="chains" value="A=1-101"/>
</dbReference>
<dbReference type="PDB" id="4J4D">
    <property type="method" value="X-ray"/>
    <property type="resolution" value="2.00 A"/>
    <property type="chains" value="A/B/C/D=1-101"/>
</dbReference>
<dbReference type="PDB" id="4J4E">
    <property type="method" value="X-ray"/>
    <property type="resolution" value="2.40 A"/>
    <property type="chains" value="A/B/C/D/E/F=1-101"/>
</dbReference>
<dbReference type="PDB" id="4J4F">
    <property type="method" value="X-ray"/>
    <property type="resolution" value="1.90 A"/>
    <property type="chains" value="A/B/C/D=1-101"/>
</dbReference>
<dbReference type="PDB" id="4J4G">
    <property type="method" value="X-ray"/>
    <property type="resolution" value="1.92 A"/>
    <property type="chains" value="A/B/C/D=1-101"/>
</dbReference>
<dbReference type="PDB" id="6X7H">
    <property type="method" value="X-ray"/>
    <property type="resolution" value="1.25 A"/>
    <property type="chains" value="A/B=1-101"/>
</dbReference>
<dbReference type="PDBsum" id="1IIY"/>
<dbReference type="PDBsum" id="1J4V"/>
<dbReference type="PDBsum" id="1L5B"/>
<dbReference type="PDBsum" id="1L5E"/>
<dbReference type="PDBsum" id="1LOM"/>
<dbReference type="PDBsum" id="1N02"/>
<dbReference type="PDBsum" id="2EZM"/>
<dbReference type="PDBsum" id="2EZN"/>
<dbReference type="PDBsum" id="2PYS"/>
<dbReference type="PDBsum" id="2RDK"/>
<dbReference type="PDBsum" id="2RP3"/>
<dbReference type="PDBsum" id="2Z21"/>
<dbReference type="PDBsum" id="3CZZ"/>
<dbReference type="PDBsum" id="3EZM"/>
<dbReference type="PDBsum" id="3GXY"/>
<dbReference type="PDBsum" id="3GXZ"/>
<dbReference type="PDBsum" id="3LHC"/>
<dbReference type="PDBsum" id="3S3Y"/>
<dbReference type="PDBsum" id="3S3Z"/>
<dbReference type="PDBsum" id="4J4C"/>
<dbReference type="PDBsum" id="4J4D"/>
<dbReference type="PDBsum" id="4J4E"/>
<dbReference type="PDBsum" id="4J4F"/>
<dbReference type="PDBsum" id="4J4G"/>
<dbReference type="PDBsum" id="6X7H"/>
<dbReference type="SMR" id="P81180"/>
<dbReference type="DrugBank" id="DB03309">
    <property type="generic name" value="N-cyclohexyltaurine"/>
</dbReference>
<dbReference type="DrugBank" id="DB02695">
    <property type="generic name" value="O1-Pentyl-Mannose"/>
</dbReference>
<dbReference type="UniLectin" id="P81180"/>
<dbReference type="EvolutionaryTrace" id="P81180"/>
<dbReference type="GO" id="GO:0030246">
    <property type="term" value="F:carbohydrate binding"/>
    <property type="evidence" value="ECO:0000314"/>
    <property type="project" value="UniProtKB"/>
</dbReference>
<dbReference type="GO" id="GO:0050688">
    <property type="term" value="P:regulation of defense response to virus"/>
    <property type="evidence" value="ECO:0000314"/>
    <property type="project" value="UniProtKB"/>
</dbReference>
<dbReference type="FunFam" id="2.30.60.10:FF:000001">
    <property type="entry name" value="Cyanovirin-N"/>
    <property type="match status" value="1"/>
</dbReference>
<dbReference type="Gene3D" id="2.30.60.10">
    <property type="entry name" value="Cyanovirin-N"/>
    <property type="match status" value="1"/>
</dbReference>
<dbReference type="InterPro" id="IPR011058">
    <property type="entry name" value="Cyanovirin-N"/>
</dbReference>
<dbReference type="InterPro" id="IPR036673">
    <property type="entry name" value="Cyanovirin-N_sf"/>
</dbReference>
<dbReference type="PANTHER" id="PTHR42076:SF1">
    <property type="entry name" value="CYANOVIRIN-N DOMAIN-CONTAINING PROTEIN"/>
    <property type="match status" value="1"/>
</dbReference>
<dbReference type="PANTHER" id="PTHR42076">
    <property type="entry name" value="CYANOVIRIN-N HOMOLOG"/>
    <property type="match status" value="1"/>
</dbReference>
<dbReference type="Pfam" id="PF08881">
    <property type="entry name" value="CVNH"/>
    <property type="match status" value="1"/>
</dbReference>
<dbReference type="SMART" id="SM01111">
    <property type="entry name" value="CVNH"/>
    <property type="match status" value="1"/>
</dbReference>
<dbReference type="SUPFAM" id="SSF51322">
    <property type="entry name" value="Cyanovirin-N"/>
    <property type="match status" value="1"/>
</dbReference>
<name>CVN_NOSEL</name>
<protein>
    <recommendedName>
        <fullName>Cyanovirin-N</fullName>
        <shortName>CV-N</shortName>
    </recommendedName>
</protein>
<comment type="function">
    <text evidence="4 8">Mannose-binding lectin.</text>
</comment>
<comment type="subunit">
    <text evidence="1 2 8">In solution exists as a metastable domain-swapped homodimer which very slowly converts into a more stable monomeric form at room temperature. Under physiological conditions it is unlikely that the dimeric species exists and indeed the monomer is more active against HIV. Interacts with HIV-1 gp120.</text>
</comment>
<comment type="PTM">
    <text>Cleavage, or reduction and alkylation of the disulfide bonds results in the loss of anti-HIV activity.</text>
</comment>
<comment type="mass spectrometry"/>
<comment type="biotechnology">
    <text evidence="3 5 6 7 8">Overexpression of this protein to provide quantities adequate for medical use as a topical microbiocide has been attempted in a number of systems including E.coli (PubMed:9210678, PubMed:19547966), Lactobacillus jensenii (PubMed:17005802), the yeast Pichia pastoris (PubMed:12356469) and Nicotiana tabacum (PubMed:16354721); see PubMed:20162270 for a review.</text>
</comment>
<comment type="miscellaneous">
    <text>Its activity in situ is unknown, however it acts as a viral entry inhibitor, inhibiting HIV-1, HIV-2 and simian immunodeficiency virus (and some other viruses such as feline immunodeficiency virus, measles virus and human herpesvirus) infection and replication. It prevents essential interactions between the envelope glycoprotein and target cell receptors by binding to carbohydrates on viral protein gp120 and possibly by other mechanisms as well. Addition to cells must occur before or shortly after virus addition. It also inhibits cell-to-cell fusion, and virus-to-cell and cell-to-cell transmission of a viral infection.</text>
</comment>
<comment type="miscellaneous">
    <text>Is remarkably stabile; the protein can withstand multiple freeze-thaw cycles, dissolution in organic solvents, treatment with salt, detergent, H(2)O(2) and boiling without significant loss of anti-HIV activity.</text>
</comment>
<comment type="similarity">
    <text evidence="10">Belongs to the cyanovirin-N family.</text>
</comment>
<proteinExistence type="evidence at protein level"/>
<keyword id="KW-0002">3D-structure</keyword>
<keyword id="KW-0930">Antiviral protein</keyword>
<keyword id="KW-0903">Direct protein sequencing</keyword>
<keyword id="KW-1015">Disulfide bond</keyword>
<keyword id="KW-0430">Lectin</keyword>
<sequence>LGKFSQTCYNSAIQGSVLTSTCERTNGGYNTSSIDLNSVIENVDGSLKWQPSNFIETCRNTQLAGSSELAAECKTRAQQFVSTKINLDDHIANIDGTLKYE</sequence>
<accession>P81180</accession>
<reference key="1">
    <citation type="journal article" date="1997" name="Antimicrob. Agents Chemother.">
        <title>Discovery of cyanovirin-N, a novel human immunodeficiency virus-inactivating protein that binds viral surface envelope glycoprotein gp120: potential applications to microbicide development.</title>
        <authorList>
            <person name="Boyd M.R."/>
            <person name="Gustafson K.R."/>
            <person name="McMahon J.B."/>
            <person name="Shoemaker R.H."/>
            <person name="O'Keefe B.R."/>
            <person name="Mori T."/>
            <person name="Gulakowski R.J."/>
            <person name="Wu L."/>
            <person name="Rivera M.I."/>
            <person name="Laurencot C.M."/>
            <person name="Currens M.J."/>
            <person name="Cardellina J.H. II"/>
            <person name="Buckheit R.W. Jr."/>
            <person name="Nara P.L."/>
            <person name="Pannell L.K."/>
            <person name="Sowder R.C. II"/>
            <person name="Henderson L.E."/>
        </authorList>
    </citation>
    <scope>PROTEIN SEQUENCE</scope>
    <scope>FUNCTION</scope>
    <scope>STABILITY</scope>
    <scope>BIOTECHNOLOGY (EXPRESSION IN E.COLI)</scope>
    <scope>INTERACTION WITH HIV-1 GP120</scope>
</reference>
<reference key="2">
    <citation type="journal article" date="1997" name="Biochem. Biophys. Res. Commun.">
        <title>Isolation, primary sequence determination, and disulfide bond structure of cyanovirin-N, an anti-HIV (human immunodeficiency virus) protein from the cyanobacterium Nostoc ellipsosporum.</title>
        <authorList>
            <person name="Gustafson K.R."/>
            <person name="Sowder R.C. II"/>
            <person name="Henderson L.E."/>
            <person name="Cardellina J.H. II"/>
            <person name="McMahon J.B."/>
            <person name="Rajamani U."/>
            <person name="Pannell L.K."/>
            <person name="Boyd M.R."/>
        </authorList>
    </citation>
    <scope>PROTEIN SEQUENCE</scope>
    <scope>MASS SPECTROMETRY</scope>
    <scope>DISULFIDE BONDS</scope>
    <scope>DISULFIDE BOND</scope>
</reference>
<reference key="3">
    <citation type="journal article" date="2000" name="J. Virol.">
        <title>Multiple antiviral activities of cyanovirin-N: blocking of human immunodeficiency virus type 1 gp120 interaction with CD4 and coreceptor and inhibition of diverse enveloped viruses.</title>
        <authorList>
            <person name="Dey B."/>
            <person name="Lerner D.L."/>
            <person name="Lusso P."/>
            <person name="Boyd M.R."/>
            <person name="Elder J.H."/>
            <person name="Berger E.A."/>
        </authorList>
    </citation>
    <scope>VIRAL SUBSTRATES</scope>
</reference>
<reference key="4">
    <citation type="journal article" date="2002" name="Protein Expr. Purif.">
        <title>Functional homologs of cyanovirin-N amenable to mass production in prokaryotic and eukaryotic hosts.</title>
        <authorList>
            <person name="Mori T."/>
            <person name="Barrientos L.G."/>
            <person name="Han Z."/>
            <person name="Gronenborn A.M."/>
            <person name="Turpin J.A."/>
            <person name="Boyd M.R."/>
        </authorList>
    </citation>
    <scope>BIOTECHNOLOGY (EXPRESSION IN PICHIA PASTORIS)</scope>
    <scope>MUTAGENESIS OF ASN-30</scope>
</reference>
<reference key="5">
    <citation type="journal article" date="2003" name="Cell. Mol. Life Sci.">
        <title>Cyanovirin-N: a sugar-binding antiviral protein with a new twist.</title>
        <authorList>
            <person name="Botos I."/>
            <person name="Wlodawer A."/>
        </authorList>
    </citation>
    <scope>FUNCTION</scope>
</reference>
<reference key="6">
    <citation type="journal article" date="2006" name="Antimicrob. Agents Chemother.">
        <title>Engineered vaginal lactobacillus strain for mucosal delivery of the human immunodeficiency virus inhibitor cyanovirin-N.</title>
        <authorList>
            <person name="Liu X."/>
            <person name="Lagenaur L.A."/>
            <person name="Simpson D.A."/>
            <person name="Essenmacher K.P."/>
            <person name="Frazier-Parker C.L."/>
            <person name="Liu Y."/>
            <person name="Tsai D."/>
            <person name="Rao S.S."/>
            <person name="Hamer D.H."/>
            <person name="Parks T.P."/>
            <person name="Lee P.P."/>
            <person name="Xu Q."/>
        </authorList>
    </citation>
    <scope>BIOTECHNOLOGY (EXPRESSION IN LACTOBACILLUS JENSENII)</scope>
</reference>
<reference key="7">
    <citation type="journal article" date="2006" name="FASEB J.">
        <title>Transgenic plant production of Cyanovirin-N, an HIV microbicide.</title>
        <authorList>
            <person name="Sexton A."/>
            <person name="Drake P.M."/>
            <person name="Mahmood N."/>
            <person name="Harman S.J."/>
            <person name="Shattock R.J."/>
            <person name="Ma J.K."/>
        </authorList>
    </citation>
    <scope>BIOTECHNOLOGY (EXPRESSION IN NICOTIANA TABACUM)</scope>
</reference>
<reference key="8">
    <citation type="journal article" date="2010" name="Appl. Microbiol. Biotechnol.">
        <title>Soluble cytoplasmic expression, rapid purification, and characterization of cyanovirin-N as a His-SUMO fusion.</title>
        <authorList>
            <person name="Gao X."/>
            <person name="Chen W."/>
            <person name="Guo C."/>
            <person name="Qian C."/>
            <person name="Liu G."/>
            <person name="Ge F."/>
            <person name="Huang Y."/>
            <person name="Kitazato K."/>
            <person name="Wang Y."/>
            <person name="Xiong S."/>
        </authorList>
    </citation>
    <scope>BIOTECHNOLOGY (EXPRESSION IN ESCHERICHIA COLI)</scope>
</reference>
<reference key="9">
    <citation type="journal article" date="2010" name="Appl. Microbiol. Biotechnol.">
        <title>The antiviral protein cyanovirin-N: the current state of its production and applications.</title>
        <authorList>
            <person name="Xiong S."/>
            <person name="Fan J."/>
            <person name="Kitazato K."/>
        </authorList>
    </citation>
    <scope>REVIEW</scope>
</reference>
<reference key="10">
    <citation type="journal article" date="1998" name="Nat. Struct. Biol.">
        <title>Solution structure of cyanovirin-N, a potent HIV-inactivating protein.</title>
        <authorList>
            <person name="Bewley C.A."/>
            <person name="Gustafson K.R."/>
            <person name="Boyd M.R."/>
            <person name="Covell D.G."/>
            <person name="Bax A."/>
            <person name="Clore G.M."/>
            <person name="Gronenborn A.M."/>
        </authorList>
    </citation>
    <scope>STRUCTURE BY NMR</scope>
</reference>
<reference key="11">
    <citation type="journal article" date="1999" name="J. Mol. Biol.">
        <title>Crystal structure of cyanovirin-N, a potent HIV-inactivating protein, shows unexpected domain swapping.</title>
        <authorList>
            <person name="Yang F."/>
            <person name="Bewley C.A."/>
            <person name="Louis J.M."/>
            <person name="Gustafson K.R."/>
            <person name="Boyd M.R."/>
            <person name="Gronenborn A.M."/>
            <person name="Clore G.M."/>
            <person name="Wlodawer A."/>
        </authorList>
    </citation>
    <scope>X-RAY CRYSTALLOGRAPHY (1.5 ANGSTROMS)</scope>
</reference>
<reference key="12">
    <citation type="journal article" date="2002" name="J. Biol. Chem.">
        <title>Structures of the complexes of a potent anti-HIV protein cyanovirin-N and high mannose oligosaccharides.</title>
        <authorList>
            <person name="Botos I."/>
            <person name="O'Keefe B.R."/>
            <person name="Shenoy S.R."/>
            <person name="Cartner L.K."/>
            <person name="Ratner D.M."/>
            <person name="Seeberger P.H."/>
            <person name="Boyd M.R."/>
            <person name="Wlodawer A."/>
        </authorList>
    </citation>
    <scope>X-RAY CRYSTALLOGRAPHY (2.4 ANGSTROMS) IN COMPLEX WITH HIGH-MANNOSE OLIGOSACCHARIDES</scope>
</reference>
<reference key="13">
    <citation type="journal article" date="2002" name="Structure">
        <title>The domain-swapped dimer of cyanovirin-N is in a metastable folded state: reconciliation of X-ray and NMR structures.</title>
        <authorList>
            <person name="Barrientos L.G."/>
            <person name="Louis J.M."/>
            <person name="Botos I."/>
            <person name="Mori T."/>
            <person name="Han Z."/>
            <person name="O'Keefe B.R."/>
            <person name="Boyd M.R."/>
            <person name="Wlodawer A."/>
            <person name="Gronenborn A.M."/>
        </authorList>
    </citation>
    <scope>X-RAY CRYSTALLOGRAPHY (2.0 ANGSTROMS)</scope>
    <scope>STRUCTURE BY NMR</scope>
    <scope>SUBUNIT</scope>
    <scope>MUTAGENESIS OF PRO-51 AND SER-52</scope>
</reference>
<organism>
    <name type="scientific">Nostoc ellipsosporum</name>
    <dbReference type="NCBI Taxonomy" id="45916"/>
    <lineage>
        <taxon>Bacteria</taxon>
        <taxon>Bacillati</taxon>
        <taxon>Cyanobacteriota</taxon>
        <taxon>Cyanophyceae</taxon>
        <taxon>Nostocales</taxon>
        <taxon>Nostocaceae</taxon>
        <taxon>Nostoc</taxon>
    </lineage>
</organism>
<evidence type="ECO:0000269" key="1">
    <source>
    </source>
</evidence>
<evidence type="ECO:0000269" key="2">
    <source>
    </source>
</evidence>
<evidence type="ECO:0000269" key="3">
    <source>
    </source>
</evidence>
<evidence type="ECO:0000269" key="4">
    <source>
    </source>
</evidence>
<evidence type="ECO:0000269" key="5">
    <source>
    </source>
</evidence>
<evidence type="ECO:0000269" key="6">
    <source>
    </source>
</evidence>
<evidence type="ECO:0000269" key="7">
    <source>
    </source>
</evidence>
<evidence type="ECO:0000269" key="8">
    <source>
    </source>
</evidence>
<evidence type="ECO:0000269" key="9">
    <source>
    </source>
</evidence>
<evidence type="ECO:0000305" key="10"/>
<evidence type="ECO:0007829" key="11">
    <source>
        <dbReference type="PDB" id="1L5B"/>
    </source>
</evidence>
<evidence type="ECO:0007829" key="12">
    <source>
        <dbReference type="PDB" id="3GXZ"/>
    </source>
</evidence>
<evidence type="ECO:0007829" key="13">
    <source>
        <dbReference type="PDB" id="6X7H"/>
    </source>
</evidence>
<feature type="chain" id="PRO_0000079579" description="Cyanovirin-N">
    <location>
        <begin position="1"/>
        <end position="101"/>
    </location>
</feature>
<feature type="disulfide bond" evidence="9">
    <location>
        <begin position="8"/>
        <end position="22"/>
    </location>
</feature>
<feature type="disulfide bond" evidence="9">
    <location>
        <begin position="58"/>
        <end position="73"/>
    </location>
</feature>
<feature type="mutagenesis site" description="Prevents N-glycosylation upon overexpression in yeast without changing anti-HIV activity." evidence="3">
    <original>N</original>
    <variation>A</variation>
    <variation>Q</variation>
    <variation>V</variation>
    <location>
        <position position="30"/>
    </location>
</feature>
<feature type="mutagenesis site" description="Protein is mostly monomeric and has wild-type anti-HIV activity." evidence="1">
    <original>P</original>
    <variation>G</variation>
    <location>
        <position position="51"/>
    </location>
</feature>
<feature type="mutagenesis site" description="Protein is exclusively dimeric and has moderate anti-HIV activity." evidence="1">
    <original>S</original>
    <variation>P</variation>
    <location>
        <position position="52"/>
    </location>
</feature>
<feature type="helix" evidence="13">
    <location>
        <begin position="4"/>
        <end position="6"/>
    </location>
</feature>
<feature type="strand" evidence="13">
    <location>
        <begin position="8"/>
        <end position="14"/>
    </location>
</feature>
<feature type="strand" evidence="13">
    <location>
        <begin position="17"/>
        <end position="23"/>
    </location>
</feature>
<feature type="strand" evidence="11">
    <location>
        <begin position="25"/>
        <end position="27"/>
    </location>
</feature>
<feature type="strand" evidence="13">
    <location>
        <begin position="29"/>
        <end position="35"/>
    </location>
</feature>
<feature type="helix" evidence="13">
    <location>
        <begin position="36"/>
        <end position="38"/>
    </location>
</feature>
<feature type="strand" evidence="13">
    <location>
        <begin position="40"/>
        <end position="43"/>
    </location>
</feature>
<feature type="strand" evidence="13">
    <location>
        <begin position="46"/>
        <end position="50"/>
    </location>
</feature>
<feature type="helix" evidence="13">
    <location>
        <begin position="54"/>
        <end position="56"/>
    </location>
</feature>
<feature type="strand" evidence="13">
    <location>
        <begin position="57"/>
        <end position="64"/>
    </location>
</feature>
<feature type="turn" evidence="13">
    <location>
        <begin position="65"/>
        <end position="67"/>
    </location>
</feature>
<feature type="strand" evidence="13">
    <location>
        <begin position="68"/>
        <end position="74"/>
    </location>
</feature>
<feature type="strand" evidence="12">
    <location>
        <begin position="76"/>
        <end position="78"/>
    </location>
</feature>
<feature type="strand" evidence="13">
    <location>
        <begin position="80"/>
        <end position="86"/>
    </location>
</feature>
<feature type="helix" evidence="13">
    <location>
        <begin position="87"/>
        <end position="89"/>
    </location>
</feature>
<feature type="strand" evidence="13">
    <location>
        <begin position="91"/>
        <end position="94"/>
    </location>
</feature>
<feature type="strand" evidence="13">
    <location>
        <begin position="97"/>
        <end position="100"/>
    </location>
</feature>